<keyword id="KW-0021">Allosteric enzyme</keyword>
<keyword id="KW-0963">Cytoplasm</keyword>
<keyword id="KW-0520">NAD</keyword>
<keyword id="KW-0560">Oxidoreductase</keyword>
<keyword id="KW-0597">Phosphoprotein</keyword>
<keyword id="KW-1185">Reference proteome</keyword>
<proteinExistence type="inferred from homology"/>
<organism>
    <name type="scientific">Nitratidesulfovibrio vulgaris (strain ATCC 29579 / DSM 644 / CCUG 34227 / NCIMB 8303 / VKM B-1760 / Hildenborough)</name>
    <name type="common">Desulfovibrio vulgaris</name>
    <dbReference type="NCBI Taxonomy" id="882"/>
    <lineage>
        <taxon>Bacteria</taxon>
        <taxon>Pseudomonadati</taxon>
        <taxon>Thermodesulfobacteriota</taxon>
        <taxon>Desulfovibrionia</taxon>
        <taxon>Desulfovibrionales</taxon>
        <taxon>Desulfovibrionaceae</taxon>
        <taxon>Nitratidesulfovibrio</taxon>
    </lineage>
</organism>
<protein>
    <recommendedName>
        <fullName evidence="1">L-lactate dehydrogenase</fullName>
        <shortName evidence="1">L-LDH</shortName>
        <ecNumber evidence="1">1.1.1.27</ecNumber>
    </recommendedName>
</protein>
<sequence length="309" mass="32213">MNRIAVIGVGNVGMAFAYAAAIKRLANDIVLIDANAARAEGESMDLADAMALVGPVQIRSGGYEQCEGARIVVVTAGAKQMPGQSRLDLVRVNAGITRDILTAVMQYADDPLYIMATNPVDVLTHVARTVTGVAPGRVIGSGTVLDSARFRGHVAEILGVDVRGVHAHIVGEHGDSEVALWSRANVSGIPVAEMCARRGIAYDAAFREKALGHVRHAAYEIIGRKGATGYGIGMSLCRIVEAILHDEHSVLTVSCPVAGHYGLGDVSLSLPCVIGSDGIEEVLDAPIAEDEQAALAASARVLGEHLAAL</sequence>
<feature type="chain" id="PRO_0000168342" description="L-lactate dehydrogenase">
    <location>
        <begin position="1"/>
        <end position="309"/>
    </location>
</feature>
<feature type="active site" description="Proton acceptor" evidence="1">
    <location>
        <position position="173"/>
    </location>
</feature>
<feature type="binding site" evidence="1">
    <location>
        <position position="12"/>
    </location>
    <ligand>
        <name>NAD(+)</name>
        <dbReference type="ChEBI" id="CHEBI:57540"/>
    </ligand>
</feature>
<feature type="binding site" evidence="1">
    <location>
        <position position="33"/>
    </location>
    <ligand>
        <name>NAD(+)</name>
        <dbReference type="ChEBI" id="CHEBI:57540"/>
    </ligand>
</feature>
<feature type="binding site" evidence="1">
    <location>
        <position position="38"/>
    </location>
    <ligand>
        <name>NAD(+)</name>
        <dbReference type="ChEBI" id="CHEBI:57540"/>
    </ligand>
</feature>
<feature type="binding site" evidence="1">
    <location>
        <position position="63"/>
    </location>
    <ligand>
        <name>NAD(+)</name>
        <dbReference type="ChEBI" id="CHEBI:57540"/>
    </ligand>
</feature>
<feature type="binding site" evidence="1">
    <location>
        <begin position="77"/>
        <end position="78"/>
    </location>
    <ligand>
        <name>NAD(+)</name>
        <dbReference type="ChEBI" id="CHEBI:57540"/>
    </ligand>
</feature>
<feature type="binding site" evidence="1">
    <location>
        <position position="80"/>
    </location>
    <ligand>
        <name>substrate</name>
    </ligand>
</feature>
<feature type="binding site" evidence="1">
    <location>
        <position position="86"/>
    </location>
    <ligand>
        <name>substrate</name>
    </ligand>
</feature>
<feature type="binding site" evidence="1">
    <location>
        <begin position="116"/>
        <end position="118"/>
    </location>
    <ligand>
        <name>NAD(+)</name>
        <dbReference type="ChEBI" id="CHEBI:57540"/>
    </ligand>
</feature>
<feature type="binding site" evidence="1">
    <location>
        <begin position="118"/>
        <end position="121"/>
    </location>
    <ligand>
        <name>substrate</name>
    </ligand>
</feature>
<feature type="binding site" evidence="1">
    <location>
        <position position="141"/>
    </location>
    <ligand>
        <name>NAD(+)</name>
        <dbReference type="ChEBI" id="CHEBI:57540"/>
    </ligand>
</feature>
<feature type="binding site" evidence="1">
    <location>
        <begin position="146"/>
        <end position="149"/>
    </location>
    <ligand>
        <name>substrate</name>
    </ligand>
</feature>
<feature type="binding site" evidence="1">
    <location>
        <position position="151"/>
    </location>
    <ligand>
        <name>beta-D-fructose 1,6-bisphosphate</name>
        <dbReference type="ChEBI" id="CHEBI:32966"/>
        <note>allosteric activator</note>
    </ligand>
</feature>
<feature type="binding site" evidence="1">
    <location>
        <position position="166"/>
    </location>
    <ligand>
        <name>beta-D-fructose 1,6-bisphosphate</name>
        <dbReference type="ChEBI" id="CHEBI:32966"/>
        <note>allosteric activator</note>
    </ligand>
</feature>
<feature type="binding site" evidence="1">
    <location>
        <position position="228"/>
    </location>
    <ligand>
        <name>substrate</name>
    </ligand>
</feature>
<feature type="modified residue" description="Phosphotyrosine" evidence="1">
    <location>
        <position position="219"/>
    </location>
</feature>
<name>LDH_NITV2</name>
<reference key="1">
    <citation type="journal article" date="2004" name="Nat. Biotechnol.">
        <title>The genome sequence of the anaerobic, sulfate-reducing bacterium Desulfovibrio vulgaris Hildenborough.</title>
        <authorList>
            <person name="Heidelberg J.F."/>
            <person name="Seshadri R."/>
            <person name="Haveman S.A."/>
            <person name="Hemme C.L."/>
            <person name="Paulsen I.T."/>
            <person name="Kolonay J.F."/>
            <person name="Eisen J.A."/>
            <person name="Ward N.L."/>
            <person name="Methe B.A."/>
            <person name="Brinkac L.M."/>
            <person name="Daugherty S.C."/>
            <person name="DeBoy R.T."/>
            <person name="Dodson R.J."/>
            <person name="Durkin A.S."/>
            <person name="Madupu R."/>
            <person name="Nelson W.C."/>
            <person name="Sullivan S.A."/>
            <person name="Fouts D.E."/>
            <person name="Haft D.H."/>
            <person name="Selengut J."/>
            <person name="Peterson J.D."/>
            <person name="Davidsen T.M."/>
            <person name="Zafar N."/>
            <person name="Zhou L."/>
            <person name="Radune D."/>
            <person name="Dimitrov G."/>
            <person name="Hance M."/>
            <person name="Tran K."/>
            <person name="Khouri H.M."/>
            <person name="Gill J."/>
            <person name="Utterback T.R."/>
            <person name="Feldblyum T.V."/>
            <person name="Wall J.D."/>
            <person name="Voordouw G."/>
            <person name="Fraser C.M."/>
        </authorList>
    </citation>
    <scope>NUCLEOTIDE SEQUENCE [LARGE SCALE GENOMIC DNA]</scope>
    <source>
        <strain>ATCC 29579 / DSM 644 / CCUG 34227 / NCIMB 8303 / VKM B-1760 / Hildenborough</strain>
    </source>
</reference>
<gene>
    <name evidence="1" type="primary">ldh</name>
    <name type="ordered locus">DVU_0600</name>
</gene>
<dbReference type="EC" id="1.1.1.27" evidence="1"/>
<dbReference type="EMBL" id="AE017285">
    <property type="protein sequence ID" value="AAS95081.1"/>
    <property type="molecule type" value="Genomic_DNA"/>
</dbReference>
<dbReference type="RefSeq" id="WP_010937903.1">
    <property type="nucleotide sequence ID" value="NC_002937.3"/>
</dbReference>
<dbReference type="RefSeq" id="YP_009822.1">
    <property type="nucleotide sequence ID" value="NC_002937.3"/>
</dbReference>
<dbReference type="SMR" id="P62051"/>
<dbReference type="STRING" id="882.DVU_0600"/>
<dbReference type="PaxDb" id="882-DVU_0600"/>
<dbReference type="EnsemblBacteria" id="AAS95081">
    <property type="protein sequence ID" value="AAS95081"/>
    <property type="gene ID" value="DVU_0600"/>
</dbReference>
<dbReference type="KEGG" id="dvu:DVU_0600"/>
<dbReference type="PATRIC" id="fig|882.5.peg.565"/>
<dbReference type="eggNOG" id="COG0039">
    <property type="taxonomic scope" value="Bacteria"/>
</dbReference>
<dbReference type="HOGENOM" id="CLU_045401_1_1_7"/>
<dbReference type="OrthoDB" id="9802969at2"/>
<dbReference type="PhylomeDB" id="P62051"/>
<dbReference type="UniPathway" id="UPA00554">
    <property type="reaction ID" value="UER00611"/>
</dbReference>
<dbReference type="Proteomes" id="UP000002194">
    <property type="component" value="Chromosome"/>
</dbReference>
<dbReference type="GO" id="GO:0005737">
    <property type="term" value="C:cytoplasm"/>
    <property type="evidence" value="ECO:0007669"/>
    <property type="project" value="UniProtKB-SubCell"/>
</dbReference>
<dbReference type="GO" id="GO:0004459">
    <property type="term" value="F:L-lactate dehydrogenase activity"/>
    <property type="evidence" value="ECO:0007669"/>
    <property type="project" value="UniProtKB-UniRule"/>
</dbReference>
<dbReference type="GO" id="GO:0006096">
    <property type="term" value="P:glycolytic process"/>
    <property type="evidence" value="ECO:0007669"/>
    <property type="project" value="UniProtKB-UniRule"/>
</dbReference>
<dbReference type="GO" id="GO:0006089">
    <property type="term" value="P:lactate metabolic process"/>
    <property type="evidence" value="ECO:0007669"/>
    <property type="project" value="TreeGrafter"/>
</dbReference>
<dbReference type="CDD" id="cd05292">
    <property type="entry name" value="LDH_2"/>
    <property type="match status" value="1"/>
</dbReference>
<dbReference type="Gene3D" id="3.90.110.10">
    <property type="entry name" value="Lactate dehydrogenase/glycoside hydrolase, family 4, C-terminal"/>
    <property type="match status" value="1"/>
</dbReference>
<dbReference type="Gene3D" id="3.40.50.720">
    <property type="entry name" value="NAD(P)-binding Rossmann-like Domain"/>
    <property type="match status" value="1"/>
</dbReference>
<dbReference type="HAMAP" id="MF_00488">
    <property type="entry name" value="Lactate_dehydrog"/>
    <property type="match status" value="1"/>
</dbReference>
<dbReference type="InterPro" id="IPR001557">
    <property type="entry name" value="L-lactate/malate_DH"/>
</dbReference>
<dbReference type="InterPro" id="IPR011304">
    <property type="entry name" value="L-lactate_DH"/>
</dbReference>
<dbReference type="InterPro" id="IPR018177">
    <property type="entry name" value="L-lactate_DH_AS"/>
</dbReference>
<dbReference type="InterPro" id="IPR022383">
    <property type="entry name" value="Lactate/malate_DH_C"/>
</dbReference>
<dbReference type="InterPro" id="IPR001236">
    <property type="entry name" value="Lactate/malate_DH_N"/>
</dbReference>
<dbReference type="InterPro" id="IPR015955">
    <property type="entry name" value="Lactate_DH/Glyco_Ohase_4_C"/>
</dbReference>
<dbReference type="InterPro" id="IPR036291">
    <property type="entry name" value="NAD(P)-bd_dom_sf"/>
</dbReference>
<dbReference type="NCBIfam" id="TIGR01771">
    <property type="entry name" value="L-LDH-NAD"/>
    <property type="match status" value="1"/>
</dbReference>
<dbReference type="NCBIfam" id="NF000824">
    <property type="entry name" value="PRK00066.1"/>
    <property type="match status" value="1"/>
</dbReference>
<dbReference type="PANTHER" id="PTHR43128">
    <property type="entry name" value="L-2-HYDROXYCARBOXYLATE DEHYDROGENASE (NAD(P)(+))"/>
    <property type="match status" value="1"/>
</dbReference>
<dbReference type="PANTHER" id="PTHR43128:SF16">
    <property type="entry name" value="L-LACTATE DEHYDROGENASE"/>
    <property type="match status" value="1"/>
</dbReference>
<dbReference type="Pfam" id="PF02866">
    <property type="entry name" value="Ldh_1_C"/>
    <property type="match status" value="1"/>
</dbReference>
<dbReference type="Pfam" id="PF00056">
    <property type="entry name" value="Ldh_1_N"/>
    <property type="match status" value="1"/>
</dbReference>
<dbReference type="PIRSF" id="PIRSF000102">
    <property type="entry name" value="Lac_mal_DH"/>
    <property type="match status" value="1"/>
</dbReference>
<dbReference type="PRINTS" id="PR00086">
    <property type="entry name" value="LLDHDRGNASE"/>
</dbReference>
<dbReference type="SUPFAM" id="SSF56327">
    <property type="entry name" value="LDH C-terminal domain-like"/>
    <property type="match status" value="1"/>
</dbReference>
<dbReference type="SUPFAM" id="SSF51735">
    <property type="entry name" value="NAD(P)-binding Rossmann-fold domains"/>
    <property type="match status" value="1"/>
</dbReference>
<dbReference type="PROSITE" id="PS00064">
    <property type="entry name" value="L_LDH"/>
    <property type="match status" value="1"/>
</dbReference>
<accession>P62051</accession>
<comment type="function">
    <text evidence="1">Catalyzes the conversion of lactate to pyruvate.</text>
</comment>
<comment type="catalytic activity">
    <reaction evidence="1">
        <text>(S)-lactate + NAD(+) = pyruvate + NADH + H(+)</text>
        <dbReference type="Rhea" id="RHEA:23444"/>
        <dbReference type="ChEBI" id="CHEBI:15361"/>
        <dbReference type="ChEBI" id="CHEBI:15378"/>
        <dbReference type="ChEBI" id="CHEBI:16651"/>
        <dbReference type="ChEBI" id="CHEBI:57540"/>
        <dbReference type="ChEBI" id="CHEBI:57945"/>
        <dbReference type="EC" id="1.1.1.27"/>
    </reaction>
</comment>
<comment type="activity regulation">
    <text evidence="1">Allosterically activated by fructose 1,6-bisphosphate (FBP).</text>
</comment>
<comment type="pathway">
    <text evidence="1">Fermentation; pyruvate fermentation to lactate; (S)-lactate from pyruvate: step 1/1.</text>
</comment>
<comment type="subunit">
    <text evidence="1">Homotetramer.</text>
</comment>
<comment type="subcellular location">
    <subcellularLocation>
        <location evidence="1">Cytoplasm</location>
    </subcellularLocation>
</comment>
<comment type="similarity">
    <text evidence="1">Belongs to the LDH/MDH superfamily. LDH family.</text>
</comment>
<evidence type="ECO:0000255" key="1">
    <source>
        <dbReference type="HAMAP-Rule" id="MF_00488"/>
    </source>
</evidence>